<organism>
    <name type="scientific">Bat coronavirus HKU5</name>
    <name type="common">BtCoV</name>
    <name type="synonym">BtCoV/HKU5/2004</name>
    <dbReference type="NCBI Taxonomy" id="694008"/>
    <lineage>
        <taxon>Viruses</taxon>
        <taxon>Riboviria</taxon>
        <taxon>Orthornavirae</taxon>
        <taxon>Pisuviricota</taxon>
        <taxon>Pisoniviricetes</taxon>
        <taxon>Nidovirales</taxon>
        <taxon>Cornidovirineae</taxon>
        <taxon>Coronaviridae</taxon>
        <taxon>Orthocoronavirinae</taxon>
        <taxon>Betacoronavirus</taxon>
        <taxon>Merbecovirus</taxon>
    </lineage>
</organism>
<accession>A3EXD1</accession>
<protein>
    <recommendedName>
        <fullName>Non-structural protein 3a</fullName>
        <shortName>ns3a</shortName>
    </recommendedName>
    <alternativeName>
        <fullName>Accessory protein 3a</fullName>
    </alternativeName>
</protein>
<sequence length="121" mass="13981">MMSMRSRRSMFIEHFNELMMRVQRPPTLLLILLVANAFSKPIGTPMPEHCSTLVGREFQSCIRQAQFDTAGMYTNRVIVLDRARTHRYPIDRDTTTAHDTSYDTSDPQLLSDIGYSFDYGK</sequence>
<evidence type="ECO:0000255" key="1"/>
<organismHost>
    <name type="scientific">Pipistrellus abramus</name>
    <name type="common">Japanese pipistrelle</name>
    <name type="synonym">Pipistrellus javanicus abramus</name>
    <dbReference type="NCBI Taxonomy" id="105295"/>
</organismHost>
<reference key="1">
    <citation type="journal article" date="2007" name="J. Virol.">
        <title>Comparative analysis of twelve genomes of three novel group 2c and group 2d coronaviruses reveals unique group and subgroup features.</title>
        <authorList>
            <person name="Woo P.C.Y."/>
            <person name="Wang M."/>
            <person name="Lau S.K.P."/>
            <person name="Xu H.F."/>
            <person name="Poon R.W.S."/>
            <person name="Guo R."/>
            <person name="Wong B.H.L."/>
            <person name="Gao K."/>
            <person name="Tsoi H.-W."/>
            <person name="Huang Y."/>
            <person name="Li K.S.M."/>
            <person name="Lam C.S.F."/>
            <person name="Chan K.-H."/>
            <person name="Zheng B.-J."/>
            <person name="Yuen K.-Y."/>
        </authorList>
    </citation>
    <scope>NUCLEOTIDE SEQUENCE [GENOMIC RNA]</scope>
    <source>
        <strain>Isolate HKU5-1</strain>
    </source>
</reference>
<proteinExistence type="inferred from homology"/>
<gene>
    <name type="ORF">3a</name>
</gene>
<dbReference type="EMBL" id="EF065509">
    <property type="protein sequence ID" value="ABN10876.1"/>
    <property type="molecule type" value="Genomic_RNA"/>
</dbReference>
<dbReference type="IntAct" id="A3EXD1">
    <property type="interactions" value="1"/>
</dbReference>
<dbReference type="KEGG" id="vg:4836004"/>
<dbReference type="OrthoDB" id="37474at10239"/>
<dbReference type="Proteomes" id="UP000007451">
    <property type="component" value="Segment"/>
</dbReference>
<name>NS3A_BCHK5</name>
<keyword id="KW-1185">Reference proteome</keyword>
<keyword id="KW-0732">Signal</keyword>
<feature type="signal peptide" evidence="1">
    <location>
        <begin position="1"/>
        <end position="39"/>
    </location>
</feature>
<feature type="chain" id="PRO_0000290263" description="Non-structural protein 3a">
    <location>
        <begin position="40"/>
        <end position="121"/>
    </location>
</feature>